<organism>
    <name type="scientific">Geobacter sp. (strain M21)</name>
    <dbReference type="NCBI Taxonomy" id="443144"/>
    <lineage>
        <taxon>Bacteria</taxon>
        <taxon>Pseudomonadati</taxon>
        <taxon>Thermodesulfobacteriota</taxon>
        <taxon>Desulfuromonadia</taxon>
        <taxon>Geobacterales</taxon>
        <taxon>Geobacteraceae</taxon>
        <taxon>Geobacter</taxon>
    </lineage>
</organism>
<evidence type="ECO:0000255" key="1">
    <source>
        <dbReference type="HAMAP-Rule" id="MF_00736"/>
    </source>
</evidence>
<evidence type="ECO:0000305" key="2"/>
<gene>
    <name evidence="1" type="primary">rplK</name>
    <name type="ordered locus">GM21_3339</name>
</gene>
<keyword id="KW-0488">Methylation</keyword>
<keyword id="KW-0687">Ribonucleoprotein</keyword>
<keyword id="KW-0689">Ribosomal protein</keyword>
<keyword id="KW-0694">RNA-binding</keyword>
<keyword id="KW-0699">rRNA-binding</keyword>
<reference key="1">
    <citation type="submission" date="2009-07" db="EMBL/GenBank/DDBJ databases">
        <title>Complete sequence of Geobacter sp. M21.</title>
        <authorList>
            <consortium name="US DOE Joint Genome Institute"/>
            <person name="Lucas S."/>
            <person name="Copeland A."/>
            <person name="Lapidus A."/>
            <person name="Glavina del Rio T."/>
            <person name="Dalin E."/>
            <person name="Tice H."/>
            <person name="Bruce D."/>
            <person name="Goodwin L."/>
            <person name="Pitluck S."/>
            <person name="Saunders E."/>
            <person name="Brettin T."/>
            <person name="Detter J.C."/>
            <person name="Han C."/>
            <person name="Larimer F."/>
            <person name="Land M."/>
            <person name="Hauser L."/>
            <person name="Kyrpides N."/>
            <person name="Ovchinnikova G."/>
            <person name="Lovley D."/>
        </authorList>
    </citation>
    <scope>NUCLEOTIDE SEQUENCE [LARGE SCALE GENOMIC DNA]</scope>
    <source>
        <strain>M21</strain>
    </source>
</reference>
<comment type="function">
    <text evidence="1">Forms part of the ribosomal stalk which helps the ribosome interact with GTP-bound translation factors.</text>
</comment>
<comment type="subunit">
    <text evidence="1">Part of the ribosomal stalk of the 50S ribosomal subunit. Interacts with L10 and the large rRNA to form the base of the stalk. L10 forms an elongated spine to which L12 dimers bind in a sequential fashion forming a multimeric L10(L12)X complex.</text>
</comment>
<comment type="PTM">
    <text evidence="1">One or more lysine residues are methylated.</text>
</comment>
<comment type="similarity">
    <text evidence="1">Belongs to the universal ribosomal protein uL11 family.</text>
</comment>
<sequence>MAKKITGYIKLQVPAGKANPSPPIGPALGQHGVNIMEFCKAFNAKTQADEGTITPVVITVYADRSFTFITKTPPAPVLIKKALGLQSGSAVPNKTKVGKLTKDQVREIATKKMPDLNAASLEAAMKTIEGTARSMGVEIV</sequence>
<feature type="chain" id="PRO_1000212776" description="Large ribosomal subunit protein uL11">
    <location>
        <begin position="1"/>
        <end position="140"/>
    </location>
</feature>
<protein>
    <recommendedName>
        <fullName evidence="1">Large ribosomal subunit protein uL11</fullName>
    </recommendedName>
    <alternativeName>
        <fullName evidence="2">50S ribosomal protein L11</fullName>
    </alternativeName>
</protein>
<name>RL11_GEOSM</name>
<dbReference type="EMBL" id="CP001661">
    <property type="protein sequence ID" value="ACT19364.1"/>
    <property type="molecule type" value="Genomic_DNA"/>
</dbReference>
<dbReference type="SMR" id="C6E4R8"/>
<dbReference type="STRING" id="443144.GM21_3339"/>
<dbReference type="KEGG" id="gem:GM21_3339"/>
<dbReference type="eggNOG" id="COG0080">
    <property type="taxonomic scope" value="Bacteria"/>
</dbReference>
<dbReference type="HOGENOM" id="CLU_074237_2_1_7"/>
<dbReference type="OrthoDB" id="9802408at2"/>
<dbReference type="GO" id="GO:0022625">
    <property type="term" value="C:cytosolic large ribosomal subunit"/>
    <property type="evidence" value="ECO:0007669"/>
    <property type="project" value="TreeGrafter"/>
</dbReference>
<dbReference type="GO" id="GO:0070180">
    <property type="term" value="F:large ribosomal subunit rRNA binding"/>
    <property type="evidence" value="ECO:0007669"/>
    <property type="project" value="UniProtKB-UniRule"/>
</dbReference>
<dbReference type="GO" id="GO:0003735">
    <property type="term" value="F:structural constituent of ribosome"/>
    <property type="evidence" value="ECO:0007669"/>
    <property type="project" value="InterPro"/>
</dbReference>
<dbReference type="GO" id="GO:0006412">
    <property type="term" value="P:translation"/>
    <property type="evidence" value="ECO:0007669"/>
    <property type="project" value="UniProtKB-UniRule"/>
</dbReference>
<dbReference type="CDD" id="cd00349">
    <property type="entry name" value="Ribosomal_L11"/>
    <property type="match status" value="1"/>
</dbReference>
<dbReference type="FunFam" id="1.10.10.250:FF:000001">
    <property type="entry name" value="50S ribosomal protein L11"/>
    <property type="match status" value="1"/>
</dbReference>
<dbReference type="FunFam" id="3.30.1550.10:FF:000001">
    <property type="entry name" value="50S ribosomal protein L11"/>
    <property type="match status" value="1"/>
</dbReference>
<dbReference type="Gene3D" id="1.10.10.250">
    <property type="entry name" value="Ribosomal protein L11, C-terminal domain"/>
    <property type="match status" value="1"/>
</dbReference>
<dbReference type="Gene3D" id="3.30.1550.10">
    <property type="entry name" value="Ribosomal protein L11/L12, N-terminal domain"/>
    <property type="match status" value="1"/>
</dbReference>
<dbReference type="HAMAP" id="MF_00736">
    <property type="entry name" value="Ribosomal_uL11"/>
    <property type="match status" value="1"/>
</dbReference>
<dbReference type="InterPro" id="IPR000911">
    <property type="entry name" value="Ribosomal_uL11"/>
</dbReference>
<dbReference type="InterPro" id="IPR006519">
    <property type="entry name" value="Ribosomal_uL11_bac-typ"/>
</dbReference>
<dbReference type="InterPro" id="IPR020783">
    <property type="entry name" value="Ribosomal_uL11_C"/>
</dbReference>
<dbReference type="InterPro" id="IPR036769">
    <property type="entry name" value="Ribosomal_uL11_C_sf"/>
</dbReference>
<dbReference type="InterPro" id="IPR020784">
    <property type="entry name" value="Ribosomal_uL11_N"/>
</dbReference>
<dbReference type="InterPro" id="IPR036796">
    <property type="entry name" value="Ribosomal_uL11_N_sf"/>
</dbReference>
<dbReference type="NCBIfam" id="TIGR01632">
    <property type="entry name" value="L11_bact"/>
    <property type="match status" value="1"/>
</dbReference>
<dbReference type="PANTHER" id="PTHR11661">
    <property type="entry name" value="60S RIBOSOMAL PROTEIN L12"/>
    <property type="match status" value="1"/>
</dbReference>
<dbReference type="PANTHER" id="PTHR11661:SF1">
    <property type="entry name" value="LARGE RIBOSOMAL SUBUNIT PROTEIN UL11M"/>
    <property type="match status" value="1"/>
</dbReference>
<dbReference type="Pfam" id="PF00298">
    <property type="entry name" value="Ribosomal_L11"/>
    <property type="match status" value="1"/>
</dbReference>
<dbReference type="Pfam" id="PF03946">
    <property type="entry name" value="Ribosomal_L11_N"/>
    <property type="match status" value="1"/>
</dbReference>
<dbReference type="SMART" id="SM00649">
    <property type="entry name" value="RL11"/>
    <property type="match status" value="1"/>
</dbReference>
<dbReference type="SUPFAM" id="SSF54747">
    <property type="entry name" value="Ribosomal L11/L12e N-terminal domain"/>
    <property type="match status" value="1"/>
</dbReference>
<dbReference type="SUPFAM" id="SSF46906">
    <property type="entry name" value="Ribosomal protein L11, C-terminal domain"/>
    <property type="match status" value="1"/>
</dbReference>
<proteinExistence type="inferred from homology"/>
<accession>C6E4R8</accession>